<dbReference type="EC" id="3.2.2.27" evidence="1"/>
<dbReference type="EMBL" id="AE004091">
    <property type="protein sequence ID" value="AAG04139.1"/>
    <property type="molecule type" value="Genomic_DNA"/>
</dbReference>
<dbReference type="PIR" id="C83551">
    <property type="entry name" value="C83551"/>
</dbReference>
<dbReference type="RefSeq" id="NP_249441.1">
    <property type="nucleotide sequence ID" value="NC_002516.2"/>
</dbReference>
<dbReference type="RefSeq" id="WP_003106436.1">
    <property type="nucleotide sequence ID" value="NZ_QZGE01000007.1"/>
</dbReference>
<dbReference type="SMR" id="Q9I5H9"/>
<dbReference type="FunCoup" id="Q9I5H9">
    <property type="interactions" value="450"/>
</dbReference>
<dbReference type="STRING" id="208964.PA0750"/>
<dbReference type="PaxDb" id="208964-PA0750"/>
<dbReference type="DNASU" id="881872"/>
<dbReference type="GeneID" id="77222682"/>
<dbReference type="GeneID" id="881872"/>
<dbReference type="KEGG" id="pae:PA0750"/>
<dbReference type="PATRIC" id="fig|208964.12.peg.779"/>
<dbReference type="PseudoCAP" id="PA0750"/>
<dbReference type="HOGENOM" id="CLU_032162_3_1_6"/>
<dbReference type="InParanoid" id="Q9I5H9"/>
<dbReference type="OrthoDB" id="9804372at2"/>
<dbReference type="PhylomeDB" id="Q9I5H9"/>
<dbReference type="BioCyc" id="PAER208964:G1FZ6-763-MONOMER"/>
<dbReference type="Proteomes" id="UP000002438">
    <property type="component" value="Chromosome"/>
</dbReference>
<dbReference type="GO" id="GO:0005737">
    <property type="term" value="C:cytoplasm"/>
    <property type="evidence" value="ECO:0007669"/>
    <property type="project" value="UniProtKB-SubCell"/>
</dbReference>
<dbReference type="GO" id="GO:0004844">
    <property type="term" value="F:uracil DNA N-glycosylase activity"/>
    <property type="evidence" value="ECO:0007669"/>
    <property type="project" value="UniProtKB-UniRule"/>
</dbReference>
<dbReference type="GO" id="GO:0097510">
    <property type="term" value="P:base-excision repair, AP site formation via deaminated base removal"/>
    <property type="evidence" value="ECO:0000318"/>
    <property type="project" value="GO_Central"/>
</dbReference>
<dbReference type="CDD" id="cd10027">
    <property type="entry name" value="UDG-F1-like"/>
    <property type="match status" value="1"/>
</dbReference>
<dbReference type="FunFam" id="3.40.470.10:FF:000001">
    <property type="entry name" value="Uracil-DNA glycosylase"/>
    <property type="match status" value="1"/>
</dbReference>
<dbReference type="Gene3D" id="3.40.470.10">
    <property type="entry name" value="Uracil-DNA glycosylase-like domain"/>
    <property type="match status" value="1"/>
</dbReference>
<dbReference type="HAMAP" id="MF_00148">
    <property type="entry name" value="UDG"/>
    <property type="match status" value="1"/>
</dbReference>
<dbReference type="InterPro" id="IPR002043">
    <property type="entry name" value="UDG_fam1"/>
</dbReference>
<dbReference type="InterPro" id="IPR018085">
    <property type="entry name" value="Ura-DNA_Glyclase_AS"/>
</dbReference>
<dbReference type="InterPro" id="IPR005122">
    <property type="entry name" value="Uracil-DNA_glycosylase-like"/>
</dbReference>
<dbReference type="InterPro" id="IPR036895">
    <property type="entry name" value="Uracil-DNA_glycosylase-like_sf"/>
</dbReference>
<dbReference type="NCBIfam" id="NF003588">
    <property type="entry name" value="PRK05254.1-1"/>
    <property type="match status" value="1"/>
</dbReference>
<dbReference type="NCBIfam" id="NF003589">
    <property type="entry name" value="PRK05254.1-2"/>
    <property type="match status" value="1"/>
</dbReference>
<dbReference type="NCBIfam" id="NF003591">
    <property type="entry name" value="PRK05254.1-4"/>
    <property type="match status" value="1"/>
</dbReference>
<dbReference type="NCBIfam" id="NF003592">
    <property type="entry name" value="PRK05254.1-5"/>
    <property type="match status" value="1"/>
</dbReference>
<dbReference type="NCBIfam" id="TIGR00628">
    <property type="entry name" value="ung"/>
    <property type="match status" value="1"/>
</dbReference>
<dbReference type="PANTHER" id="PTHR11264">
    <property type="entry name" value="URACIL-DNA GLYCOSYLASE"/>
    <property type="match status" value="1"/>
</dbReference>
<dbReference type="PANTHER" id="PTHR11264:SF0">
    <property type="entry name" value="URACIL-DNA GLYCOSYLASE"/>
    <property type="match status" value="1"/>
</dbReference>
<dbReference type="Pfam" id="PF03167">
    <property type="entry name" value="UDG"/>
    <property type="match status" value="1"/>
</dbReference>
<dbReference type="SMART" id="SM00986">
    <property type="entry name" value="UDG"/>
    <property type="match status" value="1"/>
</dbReference>
<dbReference type="SMART" id="SM00987">
    <property type="entry name" value="UreE_C"/>
    <property type="match status" value="1"/>
</dbReference>
<dbReference type="SUPFAM" id="SSF52141">
    <property type="entry name" value="Uracil-DNA glycosylase-like"/>
    <property type="match status" value="1"/>
</dbReference>
<dbReference type="PROSITE" id="PS00130">
    <property type="entry name" value="U_DNA_GLYCOSYLASE"/>
    <property type="match status" value="1"/>
</dbReference>
<reference key="1">
    <citation type="journal article" date="2000" name="Nature">
        <title>Complete genome sequence of Pseudomonas aeruginosa PAO1, an opportunistic pathogen.</title>
        <authorList>
            <person name="Stover C.K."/>
            <person name="Pham X.-Q.T."/>
            <person name="Erwin A.L."/>
            <person name="Mizoguchi S.D."/>
            <person name="Warrener P."/>
            <person name="Hickey M.J."/>
            <person name="Brinkman F.S.L."/>
            <person name="Hufnagle W.O."/>
            <person name="Kowalik D.J."/>
            <person name="Lagrou M."/>
            <person name="Garber R.L."/>
            <person name="Goltry L."/>
            <person name="Tolentino E."/>
            <person name="Westbrock-Wadman S."/>
            <person name="Yuan Y."/>
            <person name="Brody L.L."/>
            <person name="Coulter S.N."/>
            <person name="Folger K.R."/>
            <person name="Kas A."/>
            <person name="Larbig K."/>
            <person name="Lim R.M."/>
            <person name="Smith K.A."/>
            <person name="Spencer D.H."/>
            <person name="Wong G.K.-S."/>
            <person name="Wu Z."/>
            <person name="Paulsen I.T."/>
            <person name="Reizer J."/>
            <person name="Saier M.H. Jr."/>
            <person name="Hancock R.E.W."/>
            <person name="Lory S."/>
            <person name="Olson M.V."/>
        </authorList>
    </citation>
    <scope>NUCLEOTIDE SEQUENCE [LARGE SCALE GENOMIC DNA]</scope>
    <source>
        <strain>ATCC 15692 / DSM 22644 / CIP 104116 / JCM 14847 / LMG 12228 / 1C / PRS 101 / PAO1</strain>
    </source>
</reference>
<organism>
    <name type="scientific">Pseudomonas aeruginosa (strain ATCC 15692 / DSM 22644 / CIP 104116 / JCM 14847 / LMG 12228 / 1C / PRS 101 / PAO1)</name>
    <dbReference type="NCBI Taxonomy" id="208964"/>
    <lineage>
        <taxon>Bacteria</taxon>
        <taxon>Pseudomonadati</taxon>
        <taxon>Pseudomonadota</taxon>
        <taxon>Gammaproteobacteria</taxon>
        <taxon>Pseudomonadales</taxon>
        <taxon>Pseudomonadaceae</taxon>
        <taxon>Pseudomonas</taxon>
    </lineage>
</organism>
<evidence type="ECO:0000255" key="1">
    <source>
        <dbReference type="HAMAP-Rule" id="MF_00148"/>
    </source>
</evidence>
<keyword id="KW-0963">Cytoplasm</keyword>
<keyword id="KW-0227">DNA damage</keyword>
<keyword id="KW-0234">DNA repair</keyword>
<keyword id="KW-0378">Hydrolase</keyword>
<keyword id="KW-1185">Reference proteome</keyword>
<name>UNG_PSEAE</name>
<gene>
    <name evidence="1" type="primary">ung</name>
    <name type="ordered locus">PA0750</name>
</gene>
<protein>
    <recommendedName>
        <fullName evidence="1">Uracil-DNA glycosylase</fullName>
        <shortName evidence="1">UDG</shortName>
        <ecNumber evidence="1">3.2.2.27</ecNumber>
    </recommendedName>
</protein>
<sequence length="231" mass="26010">MTDNDDRIKLEASWKEALREEFDKPYMKQLGEFLRQEKAAGKVIFPPGPLIFNALNTTPLENVKVVIIGQDPYHGPGQAHGLCFSVQPGVPTPPSLQNIYKELNRDLNIPIPNNGYLQRWAEQGVLLLNTSLTVEQAKAGSHANAGWQPFTDRVIEVVNERCERLVFLLWGSHAQSKQKLIDPQRHLILKSAHPSPLSAYRGFLGNGHFSRTNKFLEQNGKTPIDWSLPDL</sequence>
<proteinExistence type="inferred from homology"/>
<feature type="chain" id="PRO_0000176127" description="Uracil-DNA glycosylase">
    <location>
        <begin position="1"/>
        <end position="231"/>
    </location>
</feature>
<feature type="active site" description="Proton acceptor" evidence="1">
    <location>
        <position position="71"/>
    </location>
</feature>
<comment type="function">
    <text evidence="1">Excises uracil residues from the DNA which can arise as a result of misincorporation of dUMP residues by DNA polymerase or due to deamination of cytosine.</text>
</comment>
<comment type="catalytic activity">
    <reaction evidence="1">
        <text>Hydrolyzes single-stranded DNA or mismatched double-stranded DNA and polynucleotides, releasing free uracil.</text>
        <dbReference type="EC" id="3.2.2.27"/>
    </reaction>
</comment>
<comment type="subcellular location">
    <subcellularLocation>
        <location evidence="1">Cytoplasm</location>
    </subcellularLocation>
</comment>
<comment type="similarity">
    <text evidence="1">Belongs to the uracil-DNA glycosylase (UDG) superfamily. UNG family.</text>
</comment>
<accession>Q9I5H9</accession>